<accession>O60384</accession>
<dbReference type="EMBL" id="AC004510">
    <property type="protein sequence ID" value="AAC08455.1"/>
    <property type="molecule type" value="Genomic_DNA"/>
</dbReference>
<dbReference type="SMR" id="O60384"/>
<dbReference type="GlyGen" id="O60384">
    <property type="glycosylation" value="1 site, 1 O-linked glycan (1 site)"/>
</dbReference>
<dbReference type="BioMuta" id="HGNC:34514"/>
<dbReference type="AGR" id="HGNC:34514"/>
<dbReference type="GeneCards" id="ZNF861P"/>
<dbReference type="HGNC" id="HGNC:34514">
    <property type="gene designation" value="ZNF861P"/>
</dbReference>
<dbReference type="neXtProt" id="NX_O60384"/>
<dbReference type="InParanoid" id="O60384"/>
<dbReference type="PAN-GO" id="O60384">
    <property type="GO annotations" value="0 GO annotations based on evolutionary models"/>
</dbReference>
<dbReference type="PhylomeDB" id="O60384"/>
<dbReference type="Pharos" id="O60384">
    <property type="development level" value="Tdark"/>
</dbReference>
<dbReference type="Proteomes" id="UP000005640">
    <property type="component" value="Unplaced"/>
</dbReference>
<dbReference type="RNAct" id="O60384">
    <property type="molecule type" value="protein"/>
</dbReference>
<dbReference type="GO" id="GO:0003700">
    <property type="term" value="F:DNA-binding transcription factor activity"/>
    <property type="evidence" value="ECO:0000303"/>
    <property type="project" value="ARUK-UCL"/>
</dbReference>
<dbReference type="GO" id="GO:0008270">
    <property type="term" value="F:zinc ion binding"/>
    <property type="evidence" value="ECO:0007669"/>
    <property type="project" value="UniProtKB-KW"/>
</dbReference>
<dbReference type="Gene3D" id="3.30.160.60">
    <property type="entry name" value="Classic Zinc Finger"/>
    <property type="match status" value="1"/>
</dbReference>
<dbReference type="InterPro" id="IPR036236">
    <property type="entry name" value="Znf_C2H2_sf"/>
</dbReference>
<dbReference type="InterPro" id="IPR013087">
    <property type="entry name" value="Znf_C2H2_type"/>
</dbReference>
<dbReference type="SUPFAM" id="SSF57667">
    <property type="entry name" value="beta-beta-alpha zinc fingers"/>
    <property type="match status" value="1"/>
</dbReference>
<dbReference type="PROSITE" id="PS00028">
    <property type="entry name" value="ZINC_FINGER_C2H2_1"/>
    <property type="match status" value="1"/>
</dbReference>
<dbReference type="PROSITE" id="PS50157">
    <property type="entry name" value="ZINC_FINGER_C2H2_2"/>
    <property type="match status" value="1"/>
</dbReference>
<proteinExistence type="uncertain"/>
<feature type="chain" id="PRO_0000326105" description="Putative zinc finger protein 861">
    <location>
        <begin position="1"/>
        <end position="105"/>
    </location>
</feature>
<feature type="zinc finger region" description="C2H2-type" evidence="1">
    <location>
        <begin position="75"/>
        <end position="97"/>
    </location>
</feature>
<protein>
    <recommendedName>
        <fullName>Putative zinc finger protein 861</fullName>
    </recommendedName>
</protein>
<sequence length="105" mass="11997">MWLSTSPYRKGSQCGEAFSQIPGHNLNKKTPPGVKPPESHVCGEVGVGYPSTERHIRDRLGRKPCEYQECRQKAYTCKPCGNAFRFHHSFHIHERPHSGENLYEC</sequence>
<organism>
    <name type="scientific">Homo sapiens</name>
    <name type="common">Human</name>
    <dbReference type="NCBI Taxonomy" id="9606"/>
    <lineage>
        <taxon>Eukaryota</taxon>
        <taxon>Metazoa</taxon>
        <taxon>Chordata</taxon>
        <taxon>Craniata</taxon>
        <taxon>Vertebrata</taxon>
        <taxon>Euteleostomi</taxon>
        <taxon>Mammalia</taxon>
        <taxon>Eutheria</taxon>
        <taxon>Euarchontoglires</taxon>
        <taxon>Primates</taxon>
        <taxon>Haplorrhini</taxon>
        <taxon>Catarrhini</taxon>
        <taxon>Hominidae</taxon>
        <taxon>Homo</taxon>
    </lineage>
</organism>
<keyword id="KW-0479">Metal-binding</keyword>
<keyword id="KW-1185">Reference proteome</keyword>
<keyword id="KW-0862">Zinc</keyword>
<keyword id="KW-0863">Zinc-finger</keyword>
<evidence type="ECO:0000255" key="1">
    <source>
        <dbReference type="PROSITE-ProRule" id="PRU00042"/>
    </source>
</evidence>
<evidence type="ECO:0000305" key="2"/>
<reference key="1">
    <citation type="journal article" date="2004" name="Nature">
        <title>The DNA sequence and biology of human chromosome 19.</title>
        <authorList>
            <person name="Grimwood J."/>
            <person name="Gordon L.A."/>
            <person name="Olsen A.S."/>
            <person name="Terry A."/>
            <person name="Schmutz J."/>
            <person name="Lamerdin J.E."/>
            <person name="Hellsten U."/>
            <person name="Goodstein D."/>
            <person name="Couronne O."/>
            <person name="Tran-Gyamfi M."/>
            <person name="Aerts A."/>
            <person name="Altherr M."/>
            <person name="Ashworth L."/>
            <person name="Bajorek E."/>
            <person name="Black S."/>
            <person name="Branscomb E."/>
            <person name="Caenepeel S."/>
            <person name="Carrano A.V."/>
            <person name="Caoile C."/>
            <person name="Chan Y.M."/>
            <person name="Christensen M."/>
            <person name="Cleland C.A."/>
            <person name="Copeland A."/>
            <person name="Dalin E."/>
            <person name="Dehal P."/>
            <person name="Denys M."/>
            <person name="Detter J.C."/>
            <person name="Escobar J."/>
            <person name="Flowers D."/>
            <person name="Fotopulos D."/>
            <person name="Garcia C."/>
            <person name="Georgescu A.M."/>
            <person name="Glavina T."/>
            <person name="Gomez M."/>
            <person name="Gonzales E."/>
            <person name="Groza M."/>
            <person name="Hammon N."/>
            <person name="Hawkins T."/>
            <person name="Haydu L."/>
            <person name="Ho I."/>
            <person name="Huang W."/>
            <person name="Israni S."/>
            <person name="Jett J."/>
            <person name="Kadner K."/>
            <person name="Kimball H."/>
            <person name="Kobayashi A."/>
            <person name="Larionov V."/>
            <person name="Leem S.-H."/>
            <person name="Lopez F."/>
            <person name="Lou Y."/>
            <person name="Lowry S."/>
            <person name="Malfatti S."/>
            <person name="Martinez D."/>
            <person name="McCready P.M."/>
            <person name="Medina C."/>
            <person name="Morgan J."/>
            <person name="Nelson K."/>
            <person name="Nolan M."/>
            <person name="Ovcharenko I."/>
            <person name="Pitluck S."/>
            <person name="Pollard M."/>
            <person name="Popkie A.P."/>
            <person name="Predki P."/>
            <person name="Quan G."/>
            <person name="Ramirez L."/>
            <person name="Rash S."/>
            <person name="Retterer J."/>
            <person name="Rodriguez A."/>
            <person name="Rogers S."/>
            <person name="Salamov A."/>
            <person name="Salazar A."/>
            <person name="She X."/>
            <person name="Smith D."/>
            <person name="Slezak T."/>
            <person name="Solovyev V."/>
            <person name="Thayer N."/>
            <person name="Tice H."/>
            <person name="Tsai M."/>
            <person name="Ustaszewska A."/>
            <person name="Vo N."/>
            <person name="Wagner M."/>
            <person name="Wheeler J."/>
            <person name="Wu K."/>
            <person name="Xie G."/>
            <person name="Yang J."/>
            <person name="Dubchak I."/>
            <person name="Furey T.S."/>
            <person name="DeJong P."/>
            <person name="Dickson M."/>
            <person name="Gordon D."/>
            <person name="Eichler E.E."/>
            <person name="Pennacchio L.A."/>
            <person name="Richardson P."/>
            <person name="Stubbs L."/>
            <person name="Rokhsar D.S."/>
            <person name="Myers R.M."/>
            <person name="Rubin E.M."/>
            <person name="Lucas S.M."/>
        </authorList>
    </citation>
    <scope>NUCLEOTIDE SEQUENCE [LARGE SCALE GENOMIC DNA]</scope>
</reference>
<gene>
    <name type="primary">ZNF861P</name>
</gene>
<comment type="caution">
    <text evidence="2">Could be the product of a pseudogene.</text>
</comment>
<name>ZN861_HUMAN</name>